<feature type="chain" id="PRO_1000024908" description="Ribonuclease PH">
    <location>
        <begin position="1"/>
        <end position="238"/>
    </location>
</feature>
<feature type="binding site" evidence="1">
    <location>
        <position position="86"/>
    </location>
    <ligand>
        <name>phosphate</name>
        <dbReference type="ChEBI" id="CHEBI:43474"/>
        <note>substrate</note>
    </ligand>
</feature>
<feature type="binding site" evidence="1">
    <location>
        <begin position="124"/>
        <end position="126"/>
    </location>
    <ligand>
        <name>phosphate</name>
        <dbReference type="ChEBI" id="CHEBI:43474"/>
        <note>substrate</note>
    </ligand>
</feature>
<dbReference type="EC" id="2.7.7.56" evidence="1"/>
<dbReference type="EMBL" id="CP000308">
    <property type="protein sequence ID" value="ABG15460.1"/>
    <property type="molecule type" value="Genomic_DNA"/>
</dbReference>
<dbReference type="RefSeq" id="WP_002208997.1">
    <property type="nucleotide sequence ID" value="NZ_CP009906.1"/>
</dbReference>
<dbReference type="SMR" id="Q1C262"/>
<dbReference type="GeneID" id="57974546"/>
<dbReference type="KEGG" id="ypa:YPA_3498"/>
<dbReference type="Proteomes" id="UP000001971">
    <property type="component" value="Chromosome"/>
</dbReference>
<dbReference type="GO" id="GO:0000175">
    <property type="term" value="F:3'-5'-RNA exonuclease activity"/>
    <property type="evidence" value="ECO:0007669"/>
    <property type="project" value="UniProtKB-UniRule"/>
</dbReference>
<dbReference type="GO" id="GO:0000049">
    <property type="term" value="F:tRNA binding"/>
    <property type="evidence" value="ECO:0007669"/>
    <property type="project" value="UniProtKB-UniRule"/>
</dbReference>
<dbReference type="GO" id="GO:0009022">
    <property type="term" value="F:tRNA nucleotidyltransferase activity"/>
    <property type="evidence" value="ECO:0007669"/>
    <property type="project" value="UniProtKB-UniRule"/>
</dbReference>
<dbReference type="GO" id="GO:0016075">
    <property type="term" value="P:rRNA catabolic process"/>
    <property type="evidence" value="ECO:0007669"/>
    <property type="project" value="UniProtKB-UniRule"/>
</dbReference>
<dbReference type="GO" id="GO:0006364">
    <property type="term" value="P:rRNA processing"/>
    <property type="evidence" value="ECO:0007669"/>
    <property type="project" value="UniProtKB-KW"/>
</dbReference>
<dbReference type="GO" id="GO:0008033">
    <property type="term" value="P:tRNA processing"/>
    <property type="evidence" value="ECO:0007669"/>
    <property type="project" value="UniProtKB-UniRule"/>
</dbReference>
<dbReference type="CDD" id="cd11362">
    <property type="entry name" value="RNase_PH_bact"/>
    <property type="match status" value="1"/>
</dbReference>
<dbReference type="FunFam" id="3.30.230.70:FF:000003">
    <property type="entry name" value="Ribonuclease PH"/>
    <property type="match status" value="1"/>
</dbReference>
<dbReference type="Gene3D" id="3.30.230.70">
    <property type="entry name" value="GHMP Kinase, N-terminal domain"/>
    <property type="match status" value="1"/>
</dbReference>
<dbReference type="HAMAP" id="MF_00564">
    <property type="entry name" value="RNase_PH"/>
    <property type="match status" value="1"/>
</dbReference>
<dbReference type="InterPro" id="IPR001247">
    <property type="entry name" value="ExoRNase_PH_dom1"/>
</dbReference>
<dbReference type="InterPro" id="IPR015847">
    <property type="entry name" value="ExoRNase_PH_dom2"/>
</dbReference>
<dbReference type="InterPro" id="IPR036345">
    <property type="entry name" value="ExoRNase_PH_dom2_sf"/>
</dbReference>
<dbReference type="InterPro" id="IPR027408">
    <property type="entry name" value="PNPase/RNase_PH_dom_sf"/>
</dbReference>
<dbReference type="InterPro" id="IPR020568">
    <property type="entry name" value="Ribosomal_Su5_D2-typ_SF"/>
</dbReference>
<dbReference type="InterPro" id="IPR050080">
    <property type="entry name" value="RNase_PH"/>
</dbReference>
<dbReference type="InterPro" id="IPR002381">
    <property type="entry name" value="RNase_PH_bac-type"/>
</dbReference>
<dbReference type="InterPro" id="IPR018336">
    <property type="entry name" value="RNase_PH_CS"/>
</dbReference>
<dbReference type="NCBIfam" id="TIGR01966">
    <property type="entry name" value="RNasePH"/>
    <property type="match status" value="1"/>
</dbReference>
<dbReference type="PANTHER" id="PTHR11953">
    <property type="entry name" value="EXOSOME COMPLEX COMPONENT"/>
    <property type="match status" value="1"/>
</dbReference>
<dbReference type="PANTHER" id="PTHR11953:SF0">
    <property type="entry name" value="EXOSOME COMPLEX COMPONENT RRP41"/>
    <property type="match status" value="1"/>
</dbReference>
<dbReference type="Pfam" id="PF01138">
    <property type="entry name" value="RNase_PH"/>
    <property type="match status" value="1"/>
</dbReference>
<dbReference type="Pfam" id="PF03725">
    <property type="entry name" value="RNase_PH_C"/>
    <property type="match status" value="1"/>
</dbReference>
<dbReference type="SUPFAM" id="SSF55666">
    <property type="entry name" value="Ribonuclease PH domain 2-like"/>
    <property type="match status" value="1"/>
</dbReference>
<dbReference type="SUPFAM" id="SSF54211">
    <property type="entry name" value="Ribosomal protein S5 domain 2-like"/>
    <property type="match status" value="1"/>
</dbReference>
<dbReference type="PROSITE" id="PS01277">
    <property type="entry name" value="RIBONUCLEASE_PH"/>
    <property type="match status" value="1"/>
</dbReference>
<gene>
    <name evidence="1" type="primary">rph</name>
    <name type="ordered locus">YPA_3498</name>
</gene>
<protein>
    <recommendedName>
        <fullName evidence="1">Ribonuclease PH</fullName>
        <shortName evidence="1">RNase PH</shortName>
        <ecNumber evidence="1">2.7.7.56</ecNumber>
    </recommendedName>
    <alternativeName>
        <fullName evidence="1">tRNA nucleotidyltransferase</fullName>
    </alternativeName>
</protein>
<evidence type="ECO:0000255" key="1">
    <source>
        <dbReference type="HAMAP-Rule" id="MF_00564"/>
    </source>
</evidence>
<keyword id="KW-0548">Nucleotidyltransferase</keyword>
<keyword id="KW-0694">RNA-binding</keyword>
<keyword id="KW-0698">rRNA processing</keyword>
<keyword id="KW-0808">Transferase</keyword>
<keyword id="KW-0819">tRNA processing</keyword>
<keyword id="KW-0820">tRNA-binding</keyword>
<name>RNPH_YERPA</name>
<sequence length="238" mass="25415">MRPADRAAQQVRPLTLTRNYTKHAEGSVLVEFGDTKVLCTATVEEGVPRFLKGQGQGWITAEYGMLPRSTHSRNAREAAKGKQGGRTLEIQRLIARSLRAAVDLKKLGEFTITLDCDVLQADGGTRTASISGACVALADALNKLVASGKLKANPMKGLVAAVSVGIVKGEALCDLEYVEDSAAETDMNVVMMEDGRMIEVQGTAEGEPFSHEELLALLDLARGGIETIFQAQKAALES</sequence>
<organism>
    <name type="scientific">Yersinia pestis bv. Antiqua (strain Antiqua)</name>
    <dbReference type="NCBI Taxonomy" id="360102"/>
    <lineage>
        <taxon>Bacteria</taxon>
        <taxon>Pseudomonadati</taxon>
        <taxon>Pseudomonadota</taxon>
        <taxon>Gammaproteobacteria</taxon>
        <taxon>Enterobacterales</taxon>
        <taxon>Yersiniaceae</taxon>
        <taxon>Yersinia</taxon>
    </lineage>
</organism>
<accession>Q1C262</accession>
<proteinExistence type="inferred from homology"/>
<comment type="function">
    <text evidence="1">Phosphorolytic 3'-5' exoribonuclease that plays an important role in tRNA 3'-end maturation. Removes nucleotide residues following the 3'-CCA terminus of tRNAs; can also add nucleotides to the ends of RNA molecules by using nucleoside diphosphates as substrates, but this may not be physiologically important. Probably plays a role in initiation of 16S rRNA degradation (leading to ribosome degradation) during starvation.</text>
</comment>
<comment type="catalytic activity">
    <reaction evidence="1">
        <text>tRNA(n+1) + phosphate = tRNA(n) + a ribonucleoside 5'-diphosphate</text>
        <dbReference type="Rhea" id="RHEA:10628"/>
        <dbReference type="Rhea" id="RHEA-COMP:17343"/>
        <dbReference type="Rhea" id="RHEA-COMP:17344"/>
        <dbReference type="ChEBI" id="CHEBI:43474"/>
        <dbReference type="ChEBI" id="CHEBI:57930"/>
        <dbReference type="ChEBI" id="CHEBI:173114"/>
        <dbReference type="EC" id="2.7.7.56"/>
    </reaction>
</comment>
<comment type="subunit">
    <text evidence="1">Homohexameric ring arranged as a trimer of dimers.</text>
</comment>
<comment type="similarity">
    <text evidence="1">Belongs to the RNase PH family.</text>
</comment>
<reference key="1">
    <citation type="journal article" date="2006" name="J. Bacteriol.">
        <title>Complete genome sequence of Yersinia pestis strains Antiqua and Nepal516: evidence of gene reduction in an emerging pathogen.</title>
        <authorList>
            <person name="Chain P.S.G."/>
            <person name="Hu P."/>
            <person name="Malfatti S.A."/>
            <person name="Radnedge L."/>
            <person name="Larimer F."/>
            <person name="Vergez L.M."/>
            <person name="Worsham P."/>
            <person name="Chu M.C."/>
            <person name="Andersen G.L."/>
        </authorList>
    </citation>
    <scope>NUCLEOTIDE SEQUENCE [LARGE SCALE GENOMIC DNA]</scope>
    <source>
        <strain>Antiqua</strain>
    </source>
</reference>